<evidence type="ECO:0000255" key="1">
    <source>
        <dbReference type="HAMAP-Rule" id="MF_00156"/>
    </source>
</evidence>
<accession>B7I682</accession>
<feature type="chain" id="PRO_1000118112" description="3-methyl-2-oxobutanoate hydroxymethyltransferase">
    <location>
        <begin position="1"/>
        <end position="269"/>
    </location>
</feature>
<feature type="active site" description="Proton acceptor" evidence="1">
    <location>
        <position position="179"/>
    </location>
</feature>
<feature type="binding site" evidence="1">
    <location>
        <begin position="43"/>
        <end position="44"/>
    </location>
    <ligand>
        <name>3-methyl-2-oxobutanoate</name>
        <dbReference type="ChEBI" id="CHEBI:11851"/>
    </ligand>
</feature>
<feature type="binding site" evidence="1">
    <location>
        <position position="43"/>
    </location>
    <ligand>
        <name>Mg(2+)</name>
        <dbReference type="ChEBI" id="CHEBI:18420"/>
    </ligand>
</feature>
<feature type="binding site" evidence="1">
    <location>
        <position position="82"/>
    </location>
    <ligand>
        <name>3-methyl-2-oxobutanoate</name>
        <dbReference type="ChEBI" id="CHEBI:11851"/>
    </ligand>
</feature>
<feature type="binding site" evidence="1">
    <location>
        <position position="82"/>
    </location>
    <ligand>
        <name>Mg(2+)</name>
        <dbReference type="ChEBI" id="CHEBI:18420"/>
    </ligand>
</feature>
<feature type="binding site" evidence="1">
    <location>
        <position position="110"/>
    </location>
    <ligand>
        <name>3-methyl-2-oxobutanoate</name>
        <dbReference type="ChEBI" id="CHEBI:11851"/>
    </ligand>
</feature>
<feature type="binding site" evidence="1">
    <location>
        <position position="112"/>
    </location>
    <ligand>
        <name>Mg(2+)</name>
        <dbReference type="ChEBI" id="CHEBI:18420"/>
    </ligand>
</feature>
<sequence>MISLSDLRKFKAEGRKFSCLTCYDASMAKAMELAEIDTILIGDSLGMAIQGRDSTLPVTVEDMAYHTAAVRRGNQHALIMTDLPFMSYATLNDALQNAKTVMQAGAQMIKIEGGAWLSETVQVLTRNGVPVCVHLGLTPQSVHVFGGYKLQARTREAADQLIADCTAVVEAGAAVLLLECVPAQLGQEIAELFPNTPVIGIGAGNATDGQVLVVQDMLGLTFGRVARFVRNFMKEQSGETAILDAFKAFHAAVQDQSFPAKEHTFQVEL</sequence>
<keyword id="KW-0963">Cytoplasm</keyword>
<keyword id="KW-0460">Magnesium</keyword>
<keyword id="KW-0479">Metal-binding</keyword>
<keyword id="KW-0566">Pantothenate biosynthesis</keyword>
<keyword id="KW-0808">Transferase</keyword>
<organism>
    <name type="scientific">Acinetobacter baumannii (strain AB0057)</name>
    <dbReference type="NCBI Taxonomy" id="480119"/>
    <lineage>
        <taxon>Bacteria</taxon>
        <taxon>Pseudomonadati</taxon>
        <taxon>Pseudomonadota</taxon>
        <taxon>Gammaproteobacteria</taxon>
        <taxon>Moraxellales</taxon>
        <taxon>Moraxellaceae</taxon>
        <taxon>Acinetobacter</taxon>
        <taxon>Acinetobacter calcoaceticus/baumannii complex</taxon>
    </lineage>
</organism>
<name>PANB_ACIB5</name>
<dbReference type="EC" id="2.1.2.11" evidence="1"/>
<dbReference type="EMBL" id="CP001182">
    <property type="protein sequence ID" value="ACJ40109.1"/>
    <property type="molecule type" value="Genomic_DNA"/>
</dbReference>
<dbReference type="RefSeq" id="WP_000624763.1">
    <property type="nucleotide sequence ID" value="NC_011586.2"/>
</dbReference>
<dbReference type="SMR" id="B7I682"/>
<dbReference type="GeneID" id="92892564"/>
<dbReference type="KEGG" id="abn:AB57_0689"/>
<dbReference type="HOGENOM" id="CLU_036645_1_0_6"/>
<dbReference type="UniPathway" id="UPA00028">
    <property type="reaction ID" value="UER00003"/>
</dbReference>
<dbReference type="Proteomes" id="UP000007094">
    <property type="component" value="Chromosome"/>
</dbReference>
<dbReference type="GO" id="GO:0005737">
    <property type="term" value="C:cytoplasm"/>
    <property type="evidence" value="ECO:0007669"/>
    <property type="project" value="UniProtKB-SubCell"/>
</dbReference>
<dbReference type="GO" id="GO:0003864">
    <property type="term" value="F:3-methyl-2-oxobutanoate hydroxymethyltransferase activity"/>
    <property type="evidence" value="ECO:0007669"/>
    <property type="project" value="UniProtKB-UniRule"/>
</dbReference>
<dbReference type="GO" id="GO:0000287">
    <property type="term" value="F:magnesium ion binding"/>
    <property type="evidence" value="ECO:0007669"/>
    <property type="project" value="TreeGrafter"/>
</dbReference>
<dbReference type="GO" id="GO:0015940">
    <property type="term" value="P:pantothenate biosynthetic process"/>
    <property type="evidence" value="ECO:0007669"/>
    <property type="project" value="UniProtKB-UniRule"/>
</dbReference>
<dbReference type="CDD" id="cd06557">
    <property type="entry name" value="KPHMT-like"/>
    <property type="match status" value="1"/>
</dbReference>
<dbReference type="FunFam" id="3.20.20.60:FF:000003">
    <property type="entry name" value="3-methyl-2-oxobutanoate hydroxymethyltransferase"/>
    <property type="match status" value="1"/>
</dbReference>
<dbReference type="Gene3D" id="3.20.20.60">
    <property type="entry name" value="Phosphoenolpyruvate-binding domains"/>
    <property type="match status" value="1"/>
</dbReference>
<dbReference type="HAMAP" id="MF_00156">
    <property type="entry name" value="PanB"/>
    <property type="match status" value="1"/>
</dbReference>
<dbReference type="InterPro" id="IPR003700">
    <property type="entry name" value="Pantoate_hydroxy_MeTrfase"/>
</dbReference>
<dbReference type="InterPro" id="IPR015813">
    <property type="entry name" value="Pyrv/PenolPyrv_kinase-like_dom"/>
</dbReference>
<dbReference type="InterPro" id="IPR040442">
    <property type="entry name" value="Pyrv_kinase-like_dom_sf"/>
</dbReference>
<dbReference type="NCBIfam" id="TIGR00222">
    <property type="entry name" value="panB"/>
    <property type="match status" value="1"/>
</dbReference>
<dbReference type="NCBIfam" id="NF001452">
    <property type="entry name" value="PRK00311.1"/>
    <property type="match status" value="1"/>
</dbReference>
<dbReference type="PANTHER" id="PTHR20881">
    <property type="entry name" value="3-METHYL-2-OXOBUTANOATE HYDROXYMETHYLTRANSFERASE"/>
    <property type="match status" value="1"/>
</dbReference>
<dbReference type="PANTHER" id="PTHR20881:SF0">
    <property type="entry name" value="3-METHYL-2-OXOBUTANOATE HYDROXYMETHYLTRANSFERASE"/>
    <property type="match status" value="1"/>
</dbReference>
<dbReference type="Pfam" id="PF02548">
    <property type="entry name" value="Pantoate_transf"/>
    <property type="match status" value="1"/>
</dbReference>
<dbReference type="PIRSF" id="PIRSF000388">
    <property type="entry name" value="Pantoate_hydroxy_MeTrfase"/>
    <property type="match status" value="1"/>
</dbReference>
<dbReference type="SUPFAM" id="SSF51621">
    <property type="entry name" value="Phosphoenolpyruvate/pyruvate domain"/>
    <property type="match status" value="1"/>
</dbReference>
<protein>
    <recommendedName>
        <fullName evidence="1">3-methyl-2-oxobutanoate hydroxymethyltransferase</fullName>
        <ecNumber evidence="1">2.1.2.11</ecNumber>
    </recommendedName>
    <alternativeName>
        <fullName evidence="1">Ketopantoate hydroxymethyltransferase</fullName>
        <shortName evidence="1">KPHMT</shortName>
    </alternativeName>
</protein>
<proteinExistence type="inferred from homology"/>
<reference key="1">
    <citation type="journal article" date="2008" name="J. Bacteriol.">
        <title>Comparative genome sequence analysis of multidrug-resistant Acinetobacter baumannii.</title>
        <authorList>
            <person name="Adams M.D."/>
            <person name="Goglin K."/>
            <person name="Molyneaux N."/>
            <person name="Hujer K.M."/>
            <person name="Lavender H."/>
            <person name="Jamison J.J."/>
            <person name="MacDonald I.J."/>
            <person name="Martin K.M."/>
            <person name="Russo T."/>
            <person name="Campagnari A.A."/>
            <person name="Hujer A.M."/>
            <person name="Bonomo R.A."/>
            <person name="Gill S.R."/>
        </authorList>
    </citation>
    <scope>NUCLEOTIDE SEQUENCE [LARGE SCALE GENOMIC DNA]</scope>
    <source>
        <strain>AB0057</strain>
    </source>
</reference>
<gene>
    <name evidence="1" type="primary">panB</name>
    <name type="ordered locus">AB57_0689</name>
</gene>
<comment type="function">
    <text evidence="1">Catalyzes the reversible reaction in which hydroxymethyl group from 5,10-methylenetetrahydrofolate is transferred onto alpha-ketoisovalerate to form ketopantoate.</text>
</comment>
<comment type="catalytic activity">
    <reaction evidence="1">
        <text>3-methyl-2-oxobutanoate + (6R)-5,10-methylene-5,6,7,8-tetrahydrofolate + H2O = 2-dehydropantoate + (6S)-5,6,7,8-tetrahydrofolate</text>
        <dbReference type="Rhea" id="RHEA:11824"/>
        <dbReference type="ChEBI" id="CHEBI:11561"/>
        <dbReference type="ChEBI" id="CHEBI:11851"/>
        <dbReference type="ChEBI" id="CHEBI:15377"/>
        <dbReference type="ChEBI" id="CHEBI:15636"/>
        <dbReference type="ChEBI" id="CHEBI:57453"/>
        <dbReference type="EC" id="2.1.2.11"/>
    </reaction>
</comment>
<comment type="cofactor">
    <cofactor evidence="1">
        <name>Mg(2+)</name>
        <dbReference type="ChEBI" id="CHEBI:18420"/>
    </cofactor>
    <text evidence="1">Binds 1 Mg(2+) ion per subunit.</text>
</comment>
<comment type="pathway">
    <text evidence="1">Cofactor biosynthesis; (R)-pantothenate biosynthesis; (R)-pantoate from 3-methyl-2-oxobutanoate: step 1/2.</text>
</comment>
<comment type="subunit">
    <text evidence="1">Homodecamer; pentamer of dimers.</text>
</comment>
<comment type="subcellular location">
    <subcellularLocation>
        <location evidence="1">Cytoplasm</location>
    </subcellularLocation>
</comment>
<comment type="similarity">
    <text evidence="1">Belongs to the PanB family.</text>
</comment>